<protein>
    <recommendedName>
        <fullName>Ubiquitin D</fullName>
    </recommendedName>
    <alternativeName>
        <fullName>Diubiquitin</fullName>
    </alternativeName>
    <alternativeName>
        <fullName evidence="25">Ubiquitin-like protein FAT10</fullName>
    </alternativeName>
</protein>
<comment type="function">
    <text evidence="7 8 9 11 13 14 15 16 17 19 20 22">Ubiquitin-like protein modifier which can be covalently attached to target proteins and subsequently leads to their degradation by the 26S proteasome, in a NUB1-dependent manner (PubMed:15831455, PubMed:16707496, PubMed:19166848). Conjugation to the target protein is activated by UBA6 via adenylation of its C-terminal glycine (PubMed:17889673, PubMed:35970836). Promotes the expression of the proteasome subunit beta type-9 (PSMB9/LMP2). Regulates TNF-alpha-induced and LPS-mediated activation of the central mediator of innate immunity NF-kappa-B by promoting TNF-alpha-mediated proteasomal degradation of ubiquitinated-I-kappa-B-alpha (PubMed:19959714). Required for TNF-alpha-induced p65 nuclear translocation in renal tubular epithelial cells (RTECs). May be involved in dendritic cell (DC) maturation, the process by which immature dendritic cells differentiate into fully competent antigen-presenting cells that initiate T-cell responses (PubMed:19028597). Mediates mitotic non-disjunction and chromosome instability, in long-term in vitro culture and cancers, by abbreviating mitotic phase and impairing the kinetochore localization of MAD2L1 during the prometaphase stage of the cell cycle (PubMed:16495226). May be involved in the formation of aggresomes when proteasome is saturated or impaired (PubMed:19033385). Mediates apoptosis in a caspase-dependent manner, especially in renal epithelium and tubular cells during renal diseases such as polycystic kidney disease and Human immunodeficiency virus (HIV)-associated nephropathy (HIVAN) (PubMed:16495380).</text>
</comment>
<comment type="subunit">
    <text evidence="3 6 8 11 13 16 21">Interacts directly with the 26S proteasome (PubMed:16707496). Interacts with NUB1; this interaction facilitates the linking of UBD-conjugated target protein to the proteasome complex and accelerates its own degradation and that of its conjugates (PubMed:14757770, PubMed:16707496, PubMed:25422469). Interacts (via ubiquitin-like 1 domain) with the spindle checkpoint protein MAD2L1 during mitosis (PubMed:10200259, PubMed:16495226, PubMed:25422469). Present in aggresomes of proteasome inhibited cells. Interacts with HDAC6 under proteasome impairment conditions (PubMed:19033385, PubMed:25422469). Forms a thioester with UBA6 in cells stimulated with tumor necrosis factor-alpha (TNFa) and interferon-gamma (IFNg) (PubMed:17889673, PubMed:25422469). Interacts with SQSTM1 and TP53/p53 (PubMed:25422469).</text>
</comment>
<comment type="interaction">
    <interactant intactId="EBI-6657186">
        <id>O15205</id>
    </interactant>
    <interactant intactId="EBI-722813">
        <id>Q13387</id>
        <label>MAPK8IP2</label>
    </interactant>
    <organismsDiffer>false</organismsDiffer>
    <experiments>3</experiments>
</comment>
<comment type="interaction">
    <interactant intactId="EBI-6657186">
        <id>O15205</id>
    </interactant>
    <interactant intactId="EBI-3936907">
        <id>Q9Y5A7</id>
        <label>NUB1</label>
    </interactant>
    <organismsDiffer>false</organismsDiffer>
    <experiments>2</experiments>
</comment>
<comment type="interaction">
    <interactant intactId="EBI-6657186">
        <id>O15205</id>
    </interactant>
    <interactant intactId="EBI-11524542">
        <id>O76083-2</id>
        <label>PDE9A</label>
    </interactant>
    <organismsDiffer>false</organismsDiffer>
    <experiments>3</experiments>
</comment>
<comment type="interaction">
    <interactant intactId="EBI-6657186">
        <id>O15205</id>
    </interactant>
    <interactant intactId="EBI-21251460">
        <id>O60260-5</id>
        <label>PRKN</label>
    </interactant>
    <organismsDiffer>false</organismsDiffer>
    <experiments>3</experiments>
</comment>
<comment type="interaction">
    <interactant intactId="EBI-6657186">
        <id>O15205</id>
    </interactant>
    <interactant intactId="EBI-985879">
        <id>P37840</id>
        <label>SNCA</label>
    </interactant>
    <organismsDiffer>false</organismsDiffer>
    <experiments>3</experiments>
</comment>
<comment type="interaction">
    <interactant intactId="EBI-6657186">
        <id>O15205</id>
    </interactant>
    <interactant intactId="EBI-720977">
        <id>Q9H832</id>
        <label>UBE2Z</label>
    </interactant>
    <organismsDiffer>false</organismsDiffer>
    <experiments>2</experiments>
</comment>
<comment type="subcellular location">
    <subcellularLocation>
        <location evidence="4 16">Nucleus</location>
    </subcellularLocation>
    <subcellularLocation>
        <location evidence="1">Cytoplasm</location>
    </subcellularLocation>
    <text>Accumulates in aggresomes under proteasome inhibition conditions.</text>
</comment>
<comment type="tissue specificity">
    <text evidence="4 23">Constitutively expressed in mature dendritic cells and B-cells. Mostly expressed in the reticuloendothelial system (e.g. thymus, spleen), the gastrointestinal system, kidney, lung and prostate gland.</text>
</comment>
<comment type="induction">
    <text evidence="4 6 9 10 12 13 14 15 18 19 20">Rapidly degraded by the proteasome. Cell-cycle regulation with highest expression during the S-phase (at protein level). Induced during dendritic cell maturation. Negatively regulated by p53/TP53. High levels in various gastrointestinal and gynecological cancer cells. Induced in RTECs in common renal diseases including diabetic nephropathy (DN), IgA nephropathy (IgAN), and hypertensive nephrosclerosis (HN), as well as in hepatocellular carcinoma (HCC) and during HIVAN. Inducible by the pro-inflammatory cytokines IFNG/IFN-gamma and TNF in cancers of liver and colon. Repressed by NUB1 (at protein level).</text>
</comment>
<comment type="PTM">
    <text evidence="16">Can be acetylated.</text>
</comment>
<comment type="miscellaneous">
    <text>Common types of chronic kidney disease are associated with tubulointerstitial up-regulation of FAT10. FAT10 may mediate NF-kappa-B activation and may promote tubulointerstitial inflammation in chronic kidney diseases.</text>
</comment>
<comment type="similarity">
    <text evidence="26">Belongs to the ubiquitin D family.</text>
</comment>
<comment type="online information" name="Atlas of Genetics and Cytogenetics in Oncology and Haematology">
    <link uri="https://atlasgeneticsoncology.org/gene/43742/UBD"/>
</comment>
<accession>O15205</accession>
<accession>B0UZT6</accession>
<accession>Q5STL2</accession>
<accession>Q5SUK2</accession>
<accession>Q96EC7</accession>
<reference key="1">
    <citation type="journal article" date="1997" name="Eur. J. Immunol.">
        <title>Identification and analysis of a novel member of the ubiquitin family expressed in dendritic cells and mature B cells.</title>
        <authorList>
            <person name="Bates E.E.M."/>
            <person name="Ravel O."/>
            <person name="Dieu M.-C."/>
            <person name="Ho S."/>
            <person name="Guret C."/>
            <person name="Bridon J.-M."/>
            <person name="Ait-Yahia S."/>
            <person name="Briere F."/>
            <person name="Caux C."/>
            <person name="Banchereau J."/>
            <person name="Lebecque S."/>
        </authorList>
    </citation>
    <scope>NUCLEOTIDE SEQUENCE [MRNA]</scope>
    <scope>VARIANT SER-160</scope>
    <scope>TISSUE SPECIFICITY</scope>
</reference>
<reference key="2">
    <citation type="journal article" date="1999" name="Proc. Natl. Acad. Sci. U.S.A.">
        <title>A MHC-encoded ubiquitin-like protein (FAT10) binds noncovalently to the spindle assembly checkpoint protein MAD2.</title>
        <authorList>
            <person name="Liu Y.-C."/>
            <person name="Pan J."/>
            <person name="Zhang C."/>
            <person name="Fan W."/>
            <person name="Collinge M."/>
            <person name="Bender J.R."/>
            <person name="Weissman S.M."/>
        </authorList>
    </citation>
    <scope>NUCLEOTIDE SEQUENCE [MRNA]</scope>
    <scope>INTERACTION WITH MAD2L1</scope>
    <scope>VARIANT SER-160</scope>
    <source>
        <tissue>Spleen</tissue>
    </source>
</reference>
<reference key="3">
    <citation type="journal article" date="2003" name="Nature">
        <title>The DNA sequence and analysis of human chromosome 6.</title>
        <authorList>
            <person name="Mungall A.J."/>
            <person name="Palmer S.A."/>
            <person name="Sims S.K."/>
            <person name="Edwards C.A."/>
            <person name="Ashurst J.L."/>
            <person name="Wilming L."/>
            <person name="Jones M.C."/>
            <person name="Horton R."/>
            <person name="Hunt S.E."/>
            <person name="Scott C.E."/>
            <person name="Gilbert J.G.R."/>
            <person name="Clamp M.E."/>
            <person name="Bethel G."/>
            <person name="Milne S."/>
            <person name="Ainscough R."/>
            <person name="Almeida J.P."/>
            <person name="Ambrose K.D."/>
            <person name="Andrews T.D."/>
            <person name="Ashwell R.I.S."/>
            <person name="Babbage A.K."/>
            <person name="Bagguley C.L."/>
            <person name="Bailey J."/>
            <person name="Banerjee R."/>
            <person name="Barker D.J."/>
            <person name="Barlow K.F."/>
            <person name="Bates K."/>
            <person name="Beare D.M."/>
            <person name="Beasley H."/>
            <person name="Beasley O."/>
            <person name="Bird C.P."/>
            <person name="Blakey S.E."/>
            <person name="Bray-Allen S."/>
            <person name="Brook J."/>
            <person name="Brown A.J."/>
            <person name="Brown J.Y."/>
            <person name="Burford D.C."/>
            <person name="Burrill W."/>
            <person name="Burton J."/>
            <person name="Carder C."/>
            <person name="Carter N.P."/>
            <person name="Chapman J.C."/>
            <person name="Clark S.Y."/>
            <person name="Clark G."/>
            <person name="Clee C.M."/>
            <person name="Clegg S."/>
            <person name="Cobley V."/>
            <person name="Collier R.E."/>
            <person name="Collins J.E."/>
            <person name="Colman L.K."/>
            <person name="Corby N.R."/>
            <person name="Coville G.J."/>
            <person name="Culley K.M."/>
            <person name="Dhami P."/>
            <person name="Davies J."/>
            <person name="Dunn M."/>
            <person name="Earthrowl M.E."/>
            <person name="Ellington A.E."/>
            <person name="Evans K.A."/>
            <person name="Faulkner L."/>
            <person name="Francis M.D."/>
            <person name="Frankish A."/>
            <person name="Frankland J."/>
            <person name="French L."/>
            <person name="Garner P."/>
            <person name="Garnett J."/>
            <person name="Ghori M.J."/>
            <person name="Gilby L.M."/>
            <person name="Gillson C.J."/>
            <person name="Glithero R.J."/>
            <person name="Grafham D.V."/>
            <person name="Grant M."/>
            <person name="Gribble S."/>
            <person name="Griffiths C."/>
            <person name="Griffiths M.N.D."/>
            <person name="Hall R."/>
            <person name="Halls K.S."/>
            <person name="Hammond S."/>
            <person name="Harley J.L."/>
            <person name="Hart E.A."/>
            <person name="Heath P.D."/>
            <person name="Heathcott R."/>
            <person name="Holmes S.J."/>
            <person name="Howden P.J."/>
            <person name="Howe K.L."/>
            <person name="Howell G.R."/>
            <person name="Huckle E."/>
            <person name="Humphray S.J."/>
            <person name="Humphries M.D."/>
            <person name="Hunt A.R."/>
            <person name="Johnson C.M."/>
            <person name="Joy A.A."/>
            <person name="Kay M."/>
            <person name="Keenan S.J."/>
            <person name="Kimberley A.M."/>
            <person name="King A."/>
            <person name="Laird G.K."/>
            <person name="Langford C."/>
            <person name="Lawlor S."/>
            <person name="Leongamornlert D.A."/>
            <person name="Leversha M."/>
            <person name="Lloyd C.R."/>
            <person name="Lloyd D.M."/>
            <person name="Loveland J.E."/>
            <person name="Lovell J."/>
            <person name="Martin S."/>
            <person name="Mashreghi-Mohammadi M."/>
            <person name="Maslen G.L."/>
            <person name="Matthews L."/>
            <person name="McCann O.T."/>
            <person name="McLaren S.J."/>
            <person name="McLay K."/>
            <person name="McMurray A."/>
            <person name="Moore M.J.F."/>
            <person name="Mullikin J.C."/>
            <person name="Niblett D."/>
            <person name="Nickerson T."/>
            <person name="Novik K.L."/>
            <person name="Oliver K."/>
            <person name="Overton-Larty E.K."/>
            <person name="Parker A."/>
            <person name="Patel R."/>
            <person name="Pearce A.V."/>
            <person name="Peck A.I."/>
            <person name="Phillimore B.J.C.T."/>
            <person name="Phillips S."/>
            <person name="Plumb R.W."/>
            <person name="Porter K.M."/>
            <person name="Ramsey Y."/>
            <person name="Ranby S.A."/>
            <person name="Rice C.M."/>
            <person name="Ross M.T."/>
            <person name="Searle S.M."/>
            <person name="Sehra H.K."/>
            <person name="Sheridan E."/>
            <person name="Skuce C.D."/>
            <person name="Smith S."/>
            <person name="Smith M."/>
            <person name="Spraggon L."/>
            <person name="Squares S.L."/>
            <person name="Steward C.A."/>
            <person name="Sycamore N."/>
            <person name="Tamlyn-Hall G."/>
            <person name="Tester J."/>
            <person name="Theaker A.J."/>
            <person name="Thomas D.W."/>
            <person name="Thorpe A."/>
            <person name="Tracey A."/>
            <person name="Tromans A."/>
            <person name="Tubby B."/>
            <person name="Wall M."/>
            <person name="Wallis J.M."/>
            <person name="West A.P."/>
            <person name="White S.S."/>
            <person name="Whitehead S.L."/>
            <person name="Whittaker H."/>
            <person name="Wild A."/>
            <person name="Willey D.J."/>
            <person name="Wilmer T.E."/>
            <person name="Wood J.M."/>
            <person name="Wray P.W."/>
            <person name="Wyatt J.C."/>
            <person name="Young L."/>
            <person name="Younger R.M."/>
            <person name="Bentley D.R."/>
            <person name="Coulson A."/>
            <person name="Durbin R.M."/>
            <person name="Hubbard T."/>
            <person name="Sulston J.E."/>
            <person name="Dunham I."/>
            <person name="Rogers J."/>
            <person name="Beck S."/>
        </authorList>
    </citation>
    <scope>NUCLEOTIDE SEQUENCE [LARGE SCALE GENOMIC DNA]</scope>
    <scope>VARIANT SER-160</scope>
</reference>
<reference key="4">
    <citation type="submission" date="2005-07" db="EMBL/GenBank/DDBJ databases">
        <authorList>
            <person name="Mural R.J."/>
            <person name="Istrail S."/>
            <person name="Sutton G.G."/>
            <person name="Florea L."/>
            <person name="Halpern A.L."/>
            <person name="Mobarry C.M."/>
            <person name="Lippert R."/>
            <person name="Walenz B."/>
            <person name="Shatkay H."/>
            <person name="Dew I."/>
            <person name="Miller J.R."/>
            <person name="Flanigan M.J."/>
            <person name="Edwards N.J."/>
            <person name="Bolanos R."/>
            <person name="Fasulo D."/>
            <person name="Halldorsson B.V."/>
            <person name="Hannenhalli S."/>
            <person name="Turner R."/>
            <person name="Yooseph S."/>
            <person name="Lu F."/>
            <person name="Nusskern D.R."/>
            <person name="Shue B.C."/>
            <person name="Zheng X.H."/>
            <person name="Zhong F."/>
            <person name="Delcher A.L."/>
            <person name="Huson D.H."/>
            <person name="Kravitz S.A."/>
            <person name="Mouchard L."/>
            <person name="Reinert K."/>
            <person name="Remington K.A."/>
            <person name="Clark A.G."/>
            <person name="Waterman M.S."/>
            <person name="Eichler E.E."/>
            <person name="Adams M.D."/>
            <person name="Hunkapiller M.W."/>
            <person name="Myers E.W."/>
            <person name="Venter J.C."/>
        </authorList>
    </citation>
    <scope>NUCLEOTIDE SEQUENCE [LARGE SCALE GENOMIC DNA]</scope>
    <scope>VARIANT SER-160</scope>
</reference>
<reference key="5">
    <citation type="journal article" date="2004" name="Genome Res.">
        <title>The status, quality, and expansion of the NIH full-length cDNA project: the Mammalian Gene Collection (MGC).</title>
        <authorList>
            <consortium name="The MGC Project Team"/>
        </authorList>
    </citation>
    <scope>NUCLEOTIDE SEQUENCE [LARGE SCALE MRNA]</scope>
    <source>
        <tissue>Urinary bladder</tissue>
    </source>
</reference>
<reference key="6">
    <citation type="journal article" date="2003" name="Oncogene">
        <title>Expression of the FAT10 gene is highly upregulated in hepatocellular carcinoma and other gastrointestinal and gynecological cancers.</title>
        <authorList>
            <person name="Lee C.G.L."/>
            <person name="Ren J."/>
            <person name="Cheong I.S.Y."/>
            <person name="Ban K.H.K."/>
            <person name="Ooi L.L.P.J."/>
            <person name="Yong Tan S."/>
            <person name="Kan A."/>
            <person name="Nuchprayoon I."/>
            <person name="Jin R."/>
            <person name="Lee K.-H."/>
            <person name="Choti M."/>
            <person name="Lee L.A."/>
        </authorList>
    </citation>
    <scope>SUBCELLULAR LOCATION</scope>
    <scope>TISSUE SPECIFICITY</scope>
    <scope>INDUCTION IN HEPATOCELLULAR CARCINOMA</scope>
</reference>
<reference key="7">
    <citation type="journal article" date="2004" name="J. Biol. Chem.">
        <title>NEDD8 ultimate buster-1L interacts with the ubiquitin-like protein FAT10 and accelerates its degradation.</title>
        <authorList>
            <person name="Hipp M.S."/>
            <person name="Raasi S."/>
            <person name="Groettrup M."/>
            <person name="Schmidtke G."/>
        </authorList>
    </citation>
    <scope>INTERACTION WITH NUB1</scope>
    <scope>INDUCTION BY NUB1</scope>
</reference>
<reference key="8">
    <citation type="journal article" date="2005" name="Mol. Cell. Biol.">
        <title>FAT10, a ubiquitin-independent signal for proteasomal degradation.</title>
        <authorList>
            <person name="Hipp M.S."/>
            <person name="Kalveram B."/>
            <person name="Raasi S."/>
            <person name="Groettrup M."/>
            <person name="Schmidtke G."/>
        </authorList>
    </citation>
    <scope>FUNCTION</scope>
</reference>
<reference key="9">
    <citation type="journal article" date="2006" name="Cell Div.">
        <title>FAT10, a gene up-regulated in various cancers, is cell-cycle regulated.</title>
        <authorList>
            <person name="Lim C.-B."/>
            <person name="Zhang D."/>
            <person name="Lee C.G."/>
        </authorList>
    </citation>
    <scope>INDUCTION BY CELL CYCLE</scope>
</reference>
<reference key="10">
    <citation type="journal article" date="2006" name="J. Am. Soc. Nephrol.">
        <title>Role of ubiquitin-like protein FAT10 in epithelial apoptosis in renal disease.</title>
        <authorList>
            <person name="Ross M.J."/>
            <person name="Wosnitzer M.S."/>
            <person name="Ross M.D."/>
            <person name="Granelli B."/>
            <person name="Gusella G.L."/>
            <person name="Husain M."/>
            <person name="Kaufman L."/>
            <person name="Vasievich M."/>
            <person name="D'Agati V.D."/>
            <person name="Wilson P.D."/>
            <person name="Klotman M.E."/>
            <person name="Klotman P.E."/>
        </authorList>
    </citation>
    <scope>FUNCTION</scope>
    <scope>INDUCTION IN HIVAN</scope>
</reference>
<reference key="11">
    <citation type="journal article" date="2006" name="J. Biol. Chem.">
        <title>FAT10 plays a role in the regulation of chromosomal stability.</title>
        <authorList>
            <person name="Ren J."/>
            <person name="Kan A."/>
            <person name="Leong S.H."/>
            <person name="Ooi L.L.P.J."/>
            <person name="Jeang K.-T."/>
            <person name="Chong S.S."/>
            <person name="Kon O.L."/>
            <person name="Lee C.G.L."/>
        </authorList>
    </citation>
    <scope>FUNCTION</scope>
    <scope>INTERACTION WITH MAD2L1</scope>
</reference>
<reference key="12">
    <citation type="journal article" date="2006" name="J. Biol. Chem.">
        <title>The UBA domains of NUB1L are required for binding but not for accelerated degradation of the ubiquitin-like modifier FAT10.</title>
        <authorList>
            <person name="Schmidtke G."/>
            <person name="Kalveram B."/>
            <person name="Weber E."/>
            <person name="Bochtler P."/>
            <person name="Lukasiak S."/>
            <person name="Hipp M.S."/>
            <person name="Groettrup M."/>
        </authorList>
    </citation>
    <scope>INTERACTION WITH NUB1 AND PROTEASOME</scope>
</reference>
<reference key="13">
    <citation type="journal article" date="2006" name="Oncogene">
        <title>p53 negatively regulates the expression of FAT10, a gene upregulated in various cancers.</title>
        <authorList>
            <person name="Zhang D.W."/>
            <person name="Jeang K.-T."/>
            <person name="Lee C.G."/>
        </authorList>
    </citation>
    <scope>INDUCTION BY TP53</scope>
</reference>
<reference key="14">
    <citation type="journal article" date="2007" name="Mol. Cell">
        <title>E1-L2 activates both ubiquitin and FAT10.</title>
        <authorList>
            <person name="Chiu Y.-H."/>
            <person name="Sun Q."/>
            <person name="Chen Z.J."/>
        </authorList>
    </citation>
    <scope>FUNCTION</scope>
    <scope>INTERACTION WITH UBA6</scope>
    <scope>THIOESTER FORMATION</scope>
    <scope>INDUCTION BY TNF AND IFNG</scope>
    <scope>MUTAGENESIS OF 164-GLY-GLY-165</scope>
</reference>
<reference key="15">
    <citation type="journal article" date="2008" name="J. Cell Sci.">
        <title>The ubiquitin-like modifier FAT10 interacts with HDAC6 and localizes to aggresomes under proteasome inhibition.</title>
        <authorList>
            <person name="Kalveram B."/>
            <person name="Schmidtke G."/>
            <person name="Groettrup M."/>
        </authorList>
    </citation>
    <scope>FUNCTION</scope>
    <scope>INTERACTION WITH HDAC6</scope>
    <scope>SUBCELLULAR LOCATION</scope>
    <scope>ACETYLATION</scope>
</reference>
<reference key="16">
    <citation type="journal article" date="2008" name="Oncogene">
        <title>Proinflammatory cytokines cause FAT10 upregulation in cancers of liver and colon.</title>
        <authorList>
            <person name="Lukasiak S."/>
            <person name="Schiller C."/>
            <person name="Oehlschlaeger P."/>
            <person name="Schmidtke G."/>
            <person name="Krause P."/>
            <person name="Legler D.F."/>
            <person name="Autschbach F."/>
            <person name="Schirmacher P."/>
            <person name="Breuhahn K."/>
            <person name="Groettrup M."/>
        </authorList>
    </citation>
    <scope>FUNCTION</scope>
    <scope>INDUCTION BY CYTOKINES</scope>
</reference>
<reference key="17">
    <citation type="journal article" date="2009" name="FEBS Lett.">
        <title>Degradation of FAT10 by the 26S proteasome is independent of ubiquitylation but relies on NUB1L.</title>
        <authorList>
            <person name="Schmidtke G."/>
            <person name="Kalveram B."/>
            <person name="Groettrup M."/>
        </authorList>
    </citation>
    <scope>FUNCTION</scope>
</reference>
<reference key="18">
    <citation type="journal article" date="2009" name="Int. J. Biochem. Cell Biol.">
        <title>Maturation of human dendritic cells is accompanied by functional remodelling of the ubiquitin-proteasome system.</title>
        <authorList>
            <person name="Ebstein F."/>
            <person name="Lange N."/>
            <person name="Urban S."/>
            <person name="Seifert U."/>
            <person name="Krueger E."/>
            <person name="Kloetzel P.-M."/>
        </authorList>
    </citation>
    <scope>FUNCTION</scope>
    <scope>INDUCTION</scope>
</reference>
<reference key="19">
    <citation type="journal article" date="2009" name="J. Virol.">
        <title>FAT10: a novel mediator of Vpr-induced apoptosis in human immunodeficiency virus-associated nephropathy.</title>
        <authorList>
            <person name="Snyder A."/>
            <person name="Alsauskas Z."/>
            <person name="Gong P."/>
            <person name="Rosenstiel P.E."/>
            <person name="Klotman M.E."/>
            <person name="Klotman P.E."/>
            <person name="Ross M.J."/>
        </authorList>
    </citation>
    <scope>FUNCTION</scope>
    <scope>INDUCTION</scope>
</reference>
<reference key="20">
    <citation type="journal article" date="2009" name="World J. Gastroenterol.">
        <title>FAT10 level in human gastric cancer and its relation with mutant p53 level, lymph node metastasis and TNM staging.</title>
        <authorList>
            <person name="Ji F."/>
            <person name="Jin X."/>
            <person name="Jiao C.-H."/>
            <person name="Xu Q.-W."/>
            <person name="Wang Z.-W."/>
            <person name="Chen Y.-L."/>
        </authorList>
    </citation>
    <scope>INDUCTION</scope>
</reference>
<reference key="21">
    <citation type="journal article" date="2010" name="J. Am. Soc. Nephrol.">
        <title>The ubiquitin-like protein FAT10 mediates NF-kappa-B activation.</title>
        <authorList>
            <person name="Gong P."/>
            <person name="Canaan A."/>
            <person name="Wang B."/>
            <person name="Leventhal J."/>
            <person name="Snyder A."/>
            <person name="Nair V."/>
            <person name="Cohen C.D."/>
            <person name="Kretzler M."/>
            <person name="D'Agati V."/>
            <person name="Weissman S."/>
            <person name="Ross M.J."/>
        </authorList>
    </citation>
    <scope>FUNCTION</scope>
    <scope>INDUCTION</scope>
</reference>
<reference evidence="27" key="22">
    <citation type="journal article" date="2014" name="Proc. Natl. Acad. Sci. U.S.A.">
        <title>Disruption of FAT10-MAD2 binding inhibits tumor progression.</title>
        <authorList>
            <person name="Theng S.S."/>
            <person name="Wang W."/>
            <person name="Mah W.C."/>
            <person name="Chan C."/>
            <person name="Zhuo J."/>
            <person name="Gao Y."/>
            <person name="Qin H."/>
            <person name="Lim L."/>
            <person name="Chong S.S."/>
            <person name="Song J."/>
            <person name="Lee C.G."/>
        </authorList>
    </citation>
    <scope>STRUCTURE BY NMR OF 8-82</scope>
    <scope>INTERACTION WITH TP53; MAD2L1; HDAC6; UBA6; NUB1 AND SQSTM1</scope>
    <scope>MUTAGENESIS OF HIS-11; ARG-13; HIS-75; THR-77; LYS-79 AND 164-GLY-GLY-165</scope>
</reference>
<reference evidence="28" key="23">
    <citation type="journal article" date="2022" name="Nat. Commun.">
        <title>Structures of UBA6 explain its dual specificity for ubiquitin and FAT10.</title>
        <authorList>
            <person name="Truongvan N."/>
            <person name="Li S."/>
            <person name="Misra M."/>
            <person name="Kuhn M."/>
            <person name="Schindelin H."/>
        </authorList>
    </citation>
    <scope>X-RAY CRYSTALLOGRAPHY (3.27 ANGSTROMS) OF 7-165 OF MUTANT THR-7; THR-9; LEU-134; SER-160 AND SER-162 IN COMPLEX WITH UBA6</scope>
    <scope>FUNCTION</scope>
</reference>
<dbReference type="EMBL" id="Y12653">
    <property type="protein sequence ID" value="CAA73200.1"/>
    <property type="molecule type" value="mRNA"/>
</dbReference>
<dbReference type="EMBL" id="AF123050">
    <property type="protein sequence ID" value="AAD52982.1"/>
    <property type="molecule type" value="mRNA"/>
</dbReference>
<dbReference type="EMBL" id="AL031983">
    <property type="protein sequence ID" value="CAA21458.1"/>
    <property type="molecule type" value="Genomic_DNA"/>
</dbReference>
<dbReference type="EMBL" id="AL662826">
    <property type="status" value="NOT_ANNOTATED_CDS"/>
    <property type="molecule type" value="Genomic_DNA"/>
</dbReference>
<dbReference type="EMBL" id="AL645936">
    <property type="status" value="NOT_ANNOTATED_CDS"/>
    <property type="molecule type" value="Genomic_DNA"/>
</dbReference>
<dbReference type="EMBL" id="CR759766">
    <property type="status" value="NOT_ANNOTATED_CDS"/>
    <property type="molecule type" value="Genomic_DNA"/>
</dbReference>
<dbReference type="EMBL" id="CR759770">
    <property type="status" value="NOT_ANNOTATED_CDS"/>
    <property type="molecule type" value="Genomic_DNA"/>
</dbReference>
<dbReference type="EMBL" id="CR942274">
    <property type="status" value="NOT_ANNOTATED_CDS"/>
    <property type="molecule type" value="Genomic_DNA"/>
</dbReference>
<dbReference type="EMBL" id="CH471081">
    <property type="protein sequence ID" value="EAX03201.1"/>
    <property type="molecule type" value="Genomic_DNA"/>
</dbReference>
<dbReference type="EMBL" id="BC012472">
    <property type="protein sequence ID" value="AAH12472.1"/>
    <property type="molecule type" value="mRNA"/>
</dbReference>
<dbReference type="CCDS" id="CCDS4662.1"/>
<dbReference type="RefSeq" id="NP_006389.2">
    <property type="nucleotide sequence ID" value="NM_006398.4"/>
</dbReference>
<dbReference type="PDB" id="2MBE">
    <property type="method" value="NMR"/>
    <property type="chains" value="A=8-82"/>
</dbReference>
<dbReference type="PDB" id="6GF1">
    <property type="method" value="X-ray"/>
    <property type="resolution" value="1.93 A"/>
    <property type="chains" value="A/B/C=10-86"/>
</dbReference>
<dbReference type="PDB" id="6GF2">
    <property type="method" value="NMR"/>
    <property type="chains" value="A=85-165"/>
</dbReference>
<dbReference type="PDB" id="7PYV">
    <property type="method" value="X-ray"/>
    <property type="resolution" value="3.27 A"/>
    <property type="chains" value="C=7-165"/>
</dbReference>
<dbReference type="PDB" id="9E8O">
    <property type="method" value="EM"/>
    <property type="resolution" value="3.10 A"/>
    <property type="chains" value="g=1-165"/>
</dbReference>
<dbReference type="PDBsum" id="2MBE"/>
<dbReference type="PDBsum" id="6GF1"/>
<dbReference type="PDBsum" id="6GF2"/>
<dbReference type="PDBsum" id="7PYV"/>
<dbReference type="PDBsum" id="9E8O"/>
<dbReference type="BMRB" id="O15205"/>
<dbReference type="SMR" id="O15205"/>
<dbReference type="BioGRID" id="115791">
    <property type="interactions" value="49"/>
</dbReference>
<dbReference type="FunCoup" id="O15205">
    <property type="interactions" value="11"/>
</dbReference>
<dbReference type="IntAct" id="O15205">
    <property type="interactions" value="11"/>
</dbReference>
<dbReference type="MINT" id="O15205"/>
<dbReference type="STRING" id="9606.ENSP00000366249"/>
<dbReference type="iPTMnet" id="O15205"/>
<dbReference type="PhosphoSitePlus" id="O15205"/>
<dbReference type="BioMuta" id="UBD"/>
<dbReference type="jPOST" id="O15205"/>
<dbReference type="MassIVE" id="O15205"/>
<dbReference type="PaxDb" id="9606-ENSP00000366249"/>
<dbReference type="PeptideAtlas" id="O15205"/>
<dbReference type="ProteomicsDB" id="48509"/>
<dbReference type="Antibodypedia" id="25984">
    <property type="antibodies" value="314 antibodies from 37 providers"/>
</dbReference>
<dbReference type="DNASU" id="10537"/>
<dbReference type="Ensembl" id="ENST00000377050.5">
    <property type="protein sequence ID" value="ENSP00000366249.4"/>
    <property type="gene ID" value="ENSG00000213886.4"/>
</dbReference>
<dbReference type="Ensembl" id="ENST00000383547.3">
    <property type="protein sequence ID" value="ENSP00000373039.3"/>
    <property type="gene ID" value="ENSG00000206468.3"/>
</dbReference>
<dbReference type="Ensembl" id="ENST00000421519.2">
    <property type="protein sequence ID" value="ENSP00000396152.2"/>
    <property type="gene ID" value="ENSG00000231968.2"/>
</dbReference>
<dbReference type="Ensembl" id="ENST00000432676.2">
    <property type="protein sequence ID" value="ENSP00000410416.2"/>
    <property type="gene ID" value="ENSG00000228913.2"/>
</dbReference>
<dbReference type="GeneID" id="10537"/>
<dbReference type="KEGG" id="hsa:10537"/>
<dbReference type="MANE-Select" id="ENST00000377050.5">
    <property type="protein sequence ID" value="ENSP00000366249.4"/>
    <property type="RefSeq nucleotide sequence ID" value="NM_006398.4"/>
    <property type="RefSeq protein sequence ID" value="NP_006389.2"/>
</dbReference>
<dbReference type="UCSC" id="uc003nmo.4">
    <property type="organism name" value="human"/>
</dbReference>
<dbReference type="AGR" id="HGNC:18795"/>
<dbReference type="CTD" id="10537"/>
<dbReference type="DisGeNET" id="10537"/>
<dbReference type="GeneCards" id="UBD"/>
<dbReference type="HGNC" id="HGNC:18795">
    <property type="gene designation" value="UBD"/>
</dbReference>
<dbReference type="HPA" id="ENSG00000213886">
    <property type="expression patterns" value="Tissue enriched (lymphoid)"/>
</dbReference>
<dbReference type="MIM" id="606050">
    <property type="type" value="gene"/>
</dbReference>
<dbReference type="neXtProt" id="NX_O15205"/>
<dbReference type="OpenTargets" id="ENSG00000213886"/>
<dbReference type="PharmGKB" id="PA38682"/>
<dbReference type="VEuPathDB" id="HostDB:ENSG00000213886"/>
<dbReference type="eggNOG" id="KOG0001">
    <property type="taxonomic scope" value="Eukaryota"/>
</dbReference>
<dbReference type="GeneTree" id="ENSGT00910000144359"/>
<dbReference type="HOGENOM" id="CLU_139252_0_0_1"/>
<dbReference type="InParanoid" id="O15205"/>
<dbReference type="OMA" id="MMADYGI"/>
<dbReference type="OrthoDB" id="428577at2759"/>
<dbReference type="PAN-GO" id="O15205">
    <property type="GO annotations" value="8 GO annotations based on evolutionary models"/>
</dbReference>
<dbReference type="PhylomeDB" id="O15205"/>
<dbReference type="PathwayCommons" id="O15205"/>
<dbReference type="Reactome" id="R-HSA-8951664">
    <property type="pathway name" value="Neddylation"/>
</dbReference>
<dbReference type="SignaLink" id="O15205"/>
<dbReference type="BioGRID-ORCS" id="10537">
    <property type="hits" value="10 hits in 1146 CRISPR screens"/>
</dbReference>
<dbReference type="ChiTaRS" id="UBD">
    <property type="organism name" value="human"/>
</dbReference>
<dbReference type="EvolutionaryTrace" id="O15205"/>
<dbReference type="GeneWiki" id="Ubiquitin_D"/>
<dbReference type="GenomeRNAi" id="10537"/>
<dbReference type="Pharos" id="O15205">
    <property type="development level" value="Tbio"/>
</dbReference>
<dbReference type="PRO" id="PR:O15205"/>
<dbReference type="Proteomes" id="UP000005640">
    <property type="component" value="Chromosome 6"/>
</dbReference>
<dbReference type="RNAct" id="O15205">
    <property type="molecule type" value="protein"/>
</dbReference>
<dbReference type="Bgee" id="ENSG00000213886">
    <property type="expression patterns" value="Expressed in vermiform appendix and 99 other cell types or tissues"/>
</dbReference>
<dbReference type="ExpressionAtlas" id="O15205">
    <property type="expression patterns" value="baseline and differential"/>
</dbReference>
<dbReference type="GO" id="GO:0016235">
    <property type="term" value="C:aggresome"/>
    <property type="evidence" value="ECO:0000314"/>
    <property type="project" value="UniProtKB"/>
</dbReference>
<dbReference type="GO" id="GO:0005737">
    <property type="term" value="C:cytoplasm"/>
    <property type="evidence" value="ECO:0000250"/>
    <property type="project" value="UniProtKB"/>
</dbReference>
<dbReference type="GO" id="GO:0005829">
    <property type="term" value="C:cytosol"/>
    <property type="evidence" value="ECO:0000304"/>
    <property type="project" value="Reactome"/>
</dbReference>
<dbReference type="GO" id="GO:0001650">
    <property type="term" value="C:fibrillar center"/>
    <property type="evidence" value="ECO:0000314"/>
    <property type="project" value="HPA"/>
</dbReference>
<dbReference type="GO" id="GO:0005654">
    <property type="term" value="C:nucleoplasm"/>
    <property type="evidence" value="ECO:0000314"/>
    <property type="project" value="HPA"/>
</dbReference>
<dbReference type="GO" id="GO:0005634">
    <property type="term" value="C:nucleus"/>
    <property type="evidence" value="ECO:0000314"/>
    <property type="project" value="UniProtKB"/>
</dbReference>
<dbReference type="GO" id="GO:0070628">
    <property type="term" value="F:proteasome binding"/>
    <property type="evidence" value="ECO:0000314"/>
    <property type="project" value="UniProtKB"/>
</dbReference>
<dbReference type="GO" id="GO:0070842">
    <property type="term" value="P:aggresome assembly"/>
    <property type="evidence" value="ECO:0000314"/>
    <property type="project" value="UniProtKB"/>
</dbReference>
<dbReference type="GO" id="GO:0043011">
    <property type="term" value="P:myeloid dendritic cell differentiation"/>
    <property type="evidence" value="ECO:0000315"/>
    <property type="project" value="UniProtKB"/>
</dbReference>
<dbReference type="GO" id="GO:0043065">
    <property type="term" value="P:positive regulation of apoptotic process"/>
    <property type="evidence" value="ECO:0000315"/>
    <property type="project" value="UniProtKB"/>
</dbReference>
<dbReference type="GO" id="GO:0043123">
    <property type="term" value="P:positive regulation of canonical NF-kappaB signal transduction"/>
    <property type="evidence" value="ECO:0000315"/>
    <property type="project" value="UniProtKB"/>
</dbReference>
<dbReference type="GO" id="GO:0032446">
    <property type="term" value="P:protein modification by small protein conjugation"/>
    <property type="evidence" value="ECO:0000303"/>
    <property type="project" value="UniProtKB"/>
</dbReference>
<dbReference type="GO" id="GO:0016567">
    <property type="term" value="P:protein ubiquitination"/>
    <property type="evidence" value="ECO:0000314"/>
    <property type="project" value="UniProtKB"/>
</dbReference>
<dbReference type="GO" id="GO:0006508">
    <property type="term" value="P:proteolysis"/>
    <property type="evidence" value="ECO:0000303"/>
    <property type="project" value="UniProtKB"/>
</dbReference>
<dbReference type="GO" id="GO:1901990">
    <property type="term" value="P:regulation of mitotic cell cycle phase transition"/>
    <property type="evidence" value="ECO:0000315"/>
    <property type="project" value="UniProtKB"/>
</dbReference>
<dbReference type="GO" id="GO:0034612">
    <property type="term" value="P:response to tumor necrosis factor"/>
    <property type="evidence" value="ECO:0000270"/>
    <property type="project" value="UniProtKB"/>
</dbReference>
<dbReference type="GO" id="GO:0034341">
    <property type="term" value="P:response to type II interferon"/>
    <property type="evidence" value="ECO:0000270"/>
    <property type="project" value="UniProtKB"/>
</dbReference>
<dbReference type="GO" id="GO:0006511">
    <property type="term" value="P:ubiquitin-dependent protein catabolic process"/>
    <property type="evidence" value="ECO:0000314"/>
    <property type="project" value="UniProtKB"/>
</dbReference>
<dbReference type="CDD" id="cd17052">
    <property type="entry name" value="Ubl1_FAT10"/>
    <property type="match status" value="1"/>
</dbReference>
<dbReference type="CDD" id="cd17053">
    <property type="entry name" value="Ubl2_FAT10"/>
    <property type="match status" value="1"/>
</dbReference>
<dbReference type="FunFam" id="3.10.20.90:FF:000234">
    <property type="entry name" value="Ubiquitin D"/>
    <property type="match status" value="1"/>
</dbReference>
<dbReference type="FunFam" id="3.10.20.90:FF:000249">
    <property type="entry name" value="Ubiquitin D"/>
    <property type="match status" value="1"/>
</dbReference>
<dbReference type="Gene3D" id="3.10.20.90">
    <property type="entry name" value="Phosphatidylinositol 3-kinase Catalytic Subunit, Chain A, domain 1"/>
    <property type="match status" value="2"/>
</dbReference>
<dbReference type="InterPro" id="IPR000626">
    <property type="entry name" value="Ubiquitin-like_dom"/>
</dbReference>
<dbReference type="InterPro" id="IPR029071">
    <property type="entry name" value="Ubiquitin-like_domsf"/>
</dbReference>
<dbReference type="InterPro" id="IPR042969">
    <property type="entry name" value="Ubiquitin_D"/>
</dbReference>
<dbReference type="InterPro" id="IPR019956">
    <property type="entry name" value="Ubiquitin_dom"/>
</dbReference>
<dbReference type="PANTHER" id="PTHR47731">
    <property type="entry name" value="UBIQUITIN D"/>
    <property type="match status" value="1"/>
</dbReference>
<dbReference type="PANTHER" id="PTHR47731:SF1">
    <property type="entry name" value="UBIQUITIN D"/>
    <property type="match status" value="1"/>
</dbReference>
<dbReference type="Pfam" id="PF00240">
    <property type="entry name" value="ubiquitin"/>
    <property type="match status" value="2"/>
</dbReference>
<dbReference type="PRINTS" id="PR00348">
    <property type="entry name" value="UBIQUITIN"/>
</dbReference>
<dbReference type="SMART" id="SM00213">
    <property type="entry name" value="UBQ"/>
    <property type="match status" value="2"/>
</dbReference>
<dbReference type="SUPFAM" id="SSF54236">
    <property type="entry name" value="Ubiquitin-like"/>
    <property type="match status" value="2"/>
</dbReference>
<dbReference type="PROSITE" id="PS50053">
    <property type="entry name" value="UBIQUITIN_2"/>
    <property type="match status" value="2"/>
</dbReference>
<evidence type="ECO:0000250" key="1">
    <source>
        <dbReference type="UniProtKB" id="P63072"/>
    </source>
</evidence>
<evidence type="ECO:0000255" key="2">
    <source>
        <dbReference type="PROSITE-ProRule" id="PRU00214"/>
    </source>
</evidence>
<evidence type="ECO:0000269" key="3">
    <source>
    </source>
</evidence>
<evidence type="ECO:0000269" key="4">
    <source>
    </source>
</evidence>
<evidence type="ECO:0000269" key="5">
    <source>
    </source>
</evidence>
<evidence type="ECO:0000269" key="6">
    <source>
    </source>
</evidence>
<evidence type="ECO:0000269" key="7">
    <source>
    </source>
</evidence>
<evidence type="ECO:0000269" key="8">
    <source>
    </source>
</evidence>
<evidence type="ECO:0000269" key="9">
    <source>
    </source>
</evidence>
<evidence type="ECO:0000269" key="10">
    <source>
    </source>
</evidence>
<evidence type="ECO:0000269" key="11">
    <source>
    </source>
</evidence>
<evidence type="ECO:0000269" key="12">
    <source>
    </source>
</evidence>
<evidence type="ECO:0000269" key="13">
    <source>
    </source>
</evidence>
<evidence type="ECO:0000269" key="14">
    <source>
    </source>
</evidence>
<evidence type="ECO:0000269" key="15">
    <source>
    </source>
</evidence>
<evidence type="ECO:0000269" key="16">
    <source>
    </source>
</evidence>
<evidence type="ECO:0000269" key="17">
    <source>
    </source>
</evidence>
<evidence type="ECO:0000269" key="18">
    <source>
    </source>
</evidence>
<evidence type="ECO:0000269" key="19">
    <source>
    </source>
</evidence>
<evidence type="ECO:0000269" key="20">
    <source>
    </source>
</evidence>
<evidence type="ECO:0000269" key="21">
    <source>
    </source>
</evidence>
<evidence type="ECO:0000269" key="22">
    <source>
    </source>
</evidence>
<evidence type="ECO:0000269" key="23">
    <source>
    </source>
</evidence>
<evidence type="ECO:0000269" key="24">
    <source ref="4"/>
</evidence>
<evidence type="ECO:0000303" key="25">
    <source>
    </source>
</evidence>
<evidence type="ECO:0000305" key="26"/>
<evidence type="ECO:0007744" key="27">
    <source>
        <dbReference type="PDB" id="2MBE"/>
    </source>
</evidence>
<evidence type="ECO:0007744" key="28">
    <source>
        <dbReference type="PDB" id="7PYV"/>
    </source>
</evidence>
<evidence type="ECO:0007829" key="29">
    <source>
        <dbReference type="PDB" id="6GF1"/>
    </source>
</evidence>
<evidence type="ECO:0007829" key="30">
    <source>
        <dbReference type="PDB" id="7PYV"/>
    </source>
</evidence>
<keyword id="KW-0002">3D-structure</keyword>
<keyword id="KW-0007">Acetylation</keyword>
<keyword id="KW-0963">Cytoplasm</keyword>
<keyword id="KW-0539">Nucleus</keyword>
<keyword id="KW-1267">Proteomics identification</keyword>
<keyword id="KW-1185">Reference proteome</keyword>
<keyword id="KW-0677">Repeat</keyword>
<keyword id="KW-0833">Ubl conjugation pathway</keyword>
<organism>
    <name type="scientific">Homo sapiens</name>
    <name type="common">Human</name>
    <dbReference type="NCBI Taxonomy" id="9606"/>
    <lineage>
        <taxon>Eukaryota</taxon>
        <taxon>Metazoa</taxon>
        <taxon>Chordata</taxon>
        <taxon>Craniata</taxon>
        <taxon>Vertebrata</taxon>
        <taxon>Euteleostomi</taxon>
        <taxon>Mammalia</taxon>
        <taxon>Eutheria</taxon>
        <taxon>Euarchontoglires</taxon>
        <taxon>Primates</taxon>
        <taxon>Haplorrhini</taxon>
        <taxon>Catarrhini</taxon>
        <taxon>Hominidae</taxon>
        <taxon>Homo</taxon>
    </lineage>
</organism>
<sequence>MAPNASCLCVHVRSEEWDLMTFDANPYDSVKKIKEHVRSKTKVPVQDQVLLLGSKILKPRRSLSSYGIDKEKTIHLTLKVVKPSDEELPLFLVESGDEAKRHLLQVRRSSSVAQVKAMIETKTGIIPETQIVTCNGKRLEDGKMMADYGIRKGNLLFLACYCIGG</sequence>
<proteinExistence type="evidence at protein level"/>
<name>UBD_HUMAN</name>
<feature type="chain" id="PRO_0000114893" description="Ubiquitin D">
    <location>
        <begin position="1"/>
        <end position="165"/>
    </location>
</feature>
<feature type="domain" description="Ubiquitin-like 1" evidence="2">
    <location>
        <begin position="6"/>
        <end position="81"/>
    </location>
</feature>
<feature type="domain" description="Ubiquitin-like 2" evidence="2">
    <location>
        <begin position="90"/>
        <end position="163"/>
    </location>
</feature>
<feature type="site" description="Activation by thioester intermediate formation with UBA6">
    <location>
        <begin position="164"/>
        <end position="165"/>
    </location>
</feature>
<feature type="sequence variant" id="VAR_024273" description="In dbSNP:rs2076484.">
    <original>L</original>
    <variation>S</variation>
    <location>
        <position position="51"/>
    </location>
</feature>
<feature type="sequence variant" id="VAR_024274" description="In dbSNP:rs2076485.">
    <original>I</original>
    <variation>T</variation>
    <location>
        <position position="68"/>
    </location>
</feature>
<feature type="sequence variant" id="VAR_024275" description="In dbSNP:rs2076486.">
    <original>S</original>
    <variation>P</variation>
    <location>
        <position position="95"/>
    </location>
</feature>
<feature type="sequence variant" id="VAR_025401" description="In dbSNP:rs2076487.">
    <original>A</original>
    <variation>G</variation>
    <location>
        <position position="99"/>
    </location>
</feature>
<feature type="sequence variant" id="VAR_052693" description="In dbSNP:rs17184290.">
    <original>E</original>
    <variation>K</variation>
    <location>
        <position position="120"/>
    </location>
</feature>
<feature type="sequence variant" id="VAR_025402" description="In dbSNP:rs8337." evidence="3 5 23 24">
    <original>C</original>
    <variation>S</variation>
    <location>
        <position position="160"/>
    </location>
</feature>
<feature type="sequence variant" id="VAR_024276" description="In dbSNP:rs7757931.">
    <original>C</original>
    <variation>F</variation>
    <location>
        <position position="162"/>
    </location>
</feature>
<feature type="mutagenesis site" description="Decreases interaction with MAD2L1, no effect on the interaction with HDAC6, UBA6, NUB1 and SQSTM1 and moderately attenuates UBD-induced tumor formation in vivo; when associated with Q-13. Complete loss of interaction with MAD2L1, no effect on the interaction with TP53/p53, HDAC6, UBA6, NUB1 and SQSTM1 and significantly attenuates UBD-induced tumor formation in vivo; when associated with Q-13; D-75; D-77 and Q-79." evidence="21">
    <original>H</original>
    <variation>D</variation>
    <location>
        <position position="11"/>
    </location>
</feature>
<feature type="mutagenesis site" description="Decreases interaction with MAD2L1, no effect on the interaction with HDAC6, UBA6, NUB1 and SQSTM1 and moderately attenuates UBD-induced tumor formation in vivo; when associated with D-11. Complete loss of interaction with MAD2L1, no effect on the interaction with TP53/p53, HDAC6, UBA6, NUB1 and SQSTM1 and significantly attenuates UBD-induced tumor formation in vivo; when associated with D-11; D-75; D-77 and Q-79." evidence="21">
    <original>R</original>
    <variation>Q</variation>
    <location>
        <position position="13"/>
    </location>
</feature>
<feature type="mutagenesis site" description="Decreases interaction with MAD2L1, no effect on the interaction with HDAC6, UBA6, NUB1 and SQSTM1 and moderately attenuates UBD-induced tumor formation in vivo; when associated with D-77 and Q-79. Complete loss of interaction with MAD2L1, no effect on the interaction with TP53/p53, HDAC6, UBA6, NUB1 and SQSTM1 and significantly attenuates UBD-induced tumor formation in vivo; when associated with D-11; Q-13; D-77 and Q-79." evidence="21">
    <original>H</original>
    <variation>D</variation>
    <location>
        <position position="75"/>
    </location>
</feature>
<feature type="mutagenesis site" description="Decreases interaction with MAD2L1, no effect on the interaction with HDAC6, UBA6, NUB1 and SQSTM1 and moderately attenuates UBD-induced tumor formation in vivo; when associated with D-75 and Q-79. Complete loss of interaction with MAD2L1, no effect on the interaction with TP53/p53, HDAC6, UBA6, NUB1 and SQSTM1 and significantly attenuates UBD-induced tumor formation in vivo; when associated with D-11; Q-13; D-75 and Q-79." evidence="21">
    <original>T</original>
    <variation>D</variation>
    <location>
        <position position="77"/>
    </location>
</feature>
<feature type="mutagenesis site" description="Decreases interaction with MAD2L1, no effect on the interaction with HDAC6, UBA6, NUB1 and SQSTM1 and moderately attenuates UBD-induced tumor formation in vivo; when associated with D-75 and D-77. Complete loss of interaction with MAD2L1, no effect on the interaction with TP53/p53, HDAC6, UBA6, NUB1 and SQSTM1 and significantly attenuates UBD-induced tumor formation in vivo; when associated with D-11; Q-13; D-75 and D-77." evidence="21">
    <original>K</original>
    <variation>Q</variation>
    <location>
        <position position="79"/>
    </location>
</feature>
<feature type="mutagenesis site" description="Impaired thioester formation-mediated activation by UBA6. Loss of interaction with UBA6 and SQSTM1. No effect on its interaction with MAD2L1, HDAC6 and NUB1." evidence="13 21">
    <original>GG</original>
    <variation>AA</variation>
    <location>
        <begin position="164"/>
        <end position="165"/>
    </location>
</feature>
<feature type="strand" evidence="29">
    <location>
        <begin position="10"/>
        <end position="17"/>
    </location>
</feature>
<feature type="strand" evidence="29">
    <location>
        <begin position="20"/>
        <end position="24"/>
    </location>
</feature>
<feature type="helix" evidence="29">
    <location>
        <begin position="30"/>
        <end position="41"/>
    </location>
</feature>
<feature type="helix" evidence="29">
    <location>
        <begin position="45"/>
        <end position="47"/>
    </location>
</feature>
<feature type="strand" evidence="29">
    <location>
        <begin position="48"/>
        <end position="52"/>
    </location>
</feature>
<feature type="strand" evidence="29">
    <location>
        <begin position="61"/>
        <end position="63"/>
    </location>
</feature>
<feature type="helix" evidence="29">
    <location>
        <begin position="64"/>
        <end position="66"/>
    </location>
</feature>
<feature type="strand" evidence="29">
    <location>
        <begin position="72"/>
        <end position="80"/>
    </location>
</feature>
<feature type="strand" evidence="30">
    <location>
        <begin position="89"/>
        <end position="95"/>
    </location>
</feature>
<feature type="strand" evidence="30">
    <location>
        <begin position="102"/>
        <end position="109"/>
    </location>
</feature>
<feature type="helix" evidence="30">
    <location>
        <begin position="112"/>
        <end position="123"/>
    </location>
</feature>
<feature type="turn" evidence="30">
    <location>
        <begin position="127"/>
        <end position="129"/>
    </location>
</feature>
<feature type="strand" evidence="30">
    <location>
        <begin position="132"/>
        <end position="134"/>
    </location>
</feature>
<feature type="helix" evidence="30">
    <location>
        <begin position="145"/>
        <end position="148"/>
    </location>
</feature>
<feature type="strand" evidence="30">
    <location>
        <begin position="155"/>
        <end position="158"/>
    </location>
</feature>
<gene>
    <name type="primary">UBD</name>
    <name type="synonym">FAT10</name>
</gene>